<protein>
    <recommendedName>
        <fullName>Rubredoxin</fullName>
        <shortName>Rd</shortName>
    </recommendedName>
</protein>
<comment type="function">
    <text>Rubredoxin is a small nonheme, iron protein lacking acid-labile sulfide. Its single Fe, chelated to 4 Cys, functions as an electron acceptor and may also stabilize the conformation of the molecule.</text>
</comment>
<comment type="cofactor">
    <cofactor evidence="1">
        <name>Fe(3+)</name>
        <dbReference type="ChEBI" id="CHEBI:29034"/>
    </cofactor>
    <text evidence="1">Binds 1 Fe(3+) ion per subunit.</text>
</comment>
<comment type="similarity">
    <text evidence="3">Belongs to the rubredoxin family.</text>
</comment>
<gene>
    <name type="ordered locus">CLOST_1462</name>
</gene>
<reference key="1">
    <citation type="submission" date="1991-04" db="PIR data bank">
        <authorList>
            <person name="Meyer J."/>
            <person name="Gagnon J."/>
            <person name="Moulis J.-M."/>
        </authorList>
    </citation>
    <scope>PROTEIN SEQUENCE</scope>
    <source>
        <strain>ATCC 12662 / DSM 519 / JCM 1433 / CCUG 9281 / NCIMB 10654 / HF</strain>
    </source>
</reference>
<reference key="2">
    <citation type="journal article" date="2010" name="BMC Genomics">
        <title>Clostridium sticklandii, a specialist in amino acid degradation:revisiting its metabolism through its genome sequence.</title>
        <authorList>
            <person name="Fonknechten N."/>
            <person name="Chaussonnerie S."/>
            <person name="Tricot S."/>
            <person name="Lajus A."/>
            <person name="Andreesen J.R."/>
            <person name="Perchat N."/>
            <person name="Pelletier E."/>
            <person name="Gouyvenoux M."/>
            <person name="Barbe V."/>
            <person name="Salanoubat M."/>
            <person name="Le Paslier D."/>
            <person name="Weissenbach J."/>
            <person name="Cohen G.N."/>
            <person name="Kreimeyer A."/>
        </authorList>
    </citation>
    <scope>NUCLEOTIDE SEQUENCE [LARGE SCALE GENOMIC DNA]</scope>
    <source>
        <strain>ATCC 12662 / DSM 519 / JCM 1433 / CCUG 9281 / NCIMB 10654 / HF</strain>
    </source>
</reference>
<keyword id="KW-0903">Direct protein sequencing</keyword>
<keyword id="KW-0249">Electron transport</keyword>
<keyword id="KW-0408">Iron</keyword>
<keyword id="KW-0479">Metal-binding</keyword>
<keyword id="KW-1185">Reference proteome</keyword>
<keyword id="KW-0813">Transport</keyword>
<proteinExistence type="evidence at protein level"/>
<feature type="chain" id="PRO_0000135033" description="Rubredoxin">
    <location>
        <begin position="1"/>
        <end position="53"/>
    </location>
</feature>
<feature type="domain" description="Rubredoxin-like" evidence="2">
    <location>
        <begin position="1"/>
        <end position="53"/>
    </location>
</feature>
<feature type="binding site" evidence="2">
    <location>
        <position position="6"/>
    </location>
    <ligand>
        <name>Fe cation</name>
        <dbReference type="ChEBI" id="CHEBI:24875"/>
    </ligand>
</feature>
<feature type="binding site" evidence="2">
    <location>
        <position position="9"/>
    </location>
    <ligand>
        <name>Fe cation</name>
        <dbReference type="ChEBI" id="CHEBI:24875"/>
    </ligand>
</feature>
<feature type="binding site" evidence="2">
    <location>
        <position position="39"/>
    </location>
    <ligand>
        <name>Fe cation</name>
        <dbReference type="ChEBI" id="CHEBI:24875"/>
    </ligand>
</feature>
<feature type="binding site" evidence="2">
    <location>
        <position position="42"/>
    </location>
    <ligand>
        <name>Fe cation</name>
        <dbReference type="ChEBI" id="CHEBI:24875"/>
    </ligand>
</feature>
<organism>
    <name type="scientific">Acetoanaerobium sticklandii (strain ATCC 12662 / DSM 519 / JCM 1433 / CCUG 9281 / NCIMB 10654 / HF)</name>
    <name type="common">Clostridium sticklandii</name>
    <dbReference type="NCBI Taxonomy" id="499177"/>
    <lineage>
        <taxon>Bacteria</taxon>
        <taxon>Bacillati</taxon>
        <taxon>Bacillota</taxon>
        <taxon>Clostridia</taxon>
        <taxon>Peptostreptococcales</taxon>
        <taxon>Filifactoraceae</taxon>
        <taxon>Acetoanaerobium</taxon>
    </lineage>
</organism>
<name>RUBR_ACESD</name>
<accession>P23474</accession>
<accession>E3PRS8</accession>
<dbReference type="EMBL" id="FP565809">
    <property type="protein sequence ID" value="CBH21582.1"/>
    <property type="molecule type" value="Genomic_DNA"/>
</dbReference>
<dbReference type="PIR" id="A33182">
    <property type="entry name" value="A33182"/>
</dbReference>
<dbReference type="SMR" id="P23474"/>
<dbReference type="STRING" id="1511.CLOST_1462"/>
<dbReference type="KEGG" id="cst:CLOST_1462"/>
<dbReference type="eggNOG" id="COG1773">
    <property type="taxonomic scope" value="Bacteria"/>
</dbReference>
<dbReference type="HOGENOM" id="CLU_128747_3_3_9"/>
<dbReference type="BioCyc" id="CSTI499177:GJE9-1514-MONOMER"/>
<dbReference type="Proteomes" id="UP000007041">
    <property type="component" value="Chromosome"/>
</dbReference>
<dbReference type="GO" id="GO:0009055">
    <property type="term" value="F:electron transfer activity"/>
    <property type="evidence" value="ECO:0007669"/>
    <property type="project" value="InterPro"/>
</dbReference>
<dbReference type="GO" id="GO:0005506">
    <property type="term" value="F:iron ion binding"/>
    <property type="evidence" value="ECO:0007669"/>
    <property type="project" value="InterPro"/>
</dbReference>
<dbReference type="GO" id="GO:0043448">
    <property type="term" value="P:alkane catabolic process"/>
    <property type="evidence" value="ECO:0007669"/>
    <property type="project" value="TreeGrafter"/>
</dbReference>
<dbReference type="CDD" id="cd00730">
    <property type="entry name" value="rubredoxin"/>
    <property type="match status" value="1"/>
</dbReference>
<dbReference type="FunFam" id="2.20.28.10:FF:000001">
    <property type="entry name" value="Rubredoxin"/>
    <property type="match status" value="1"/>
</dbReference>
<dbReference type="Gene3D" id="2.20.28.10">
    <property type="match status" value="1"/>
</dbReference>
<dbReference type="InterPro" id="IPR024922">
    <property type="entry name" value="Rubredoxin"/>
</dbReference>
<dbReference type="InterPro" id="IPR024934">
    <property type="entry name" value="Rubredoxin-like_dom"/>
</dbReference>
<dbReference type="InterPro" id="IPR024935">
    <property type="entry name" value="Rubredoxin_dom"/>
</dbReference>
<dbReference type="InterPro" id="IPR050526">
    <property type="entry name" value="Rubredoxin_ET"/>
</dbReference>
<dbReference type="InterPro" id="IPR018527">
    <property type="entry name" value="Rubredoxin_Fe_BS"/>
</dbReference>
<dbReference type="NCBIfam" id="NF045768">
    <property type="entry name" value="RubredRD"/>
    <property type="match status" value="1"/>
</dbReference>
<dbReference type="PANTHER" id="PTHR47627">
    <property type="entry name" value="RUBREDOXIN"/>
    <property type="match status" value="1"/>
</dbReference>
<dbReference type="PANTHER" id="PTHR47627:SF1">
    <property type="entry name" value="RUBREDOXIN-1-RELATED"/>
    <property type="match status" value="1"/>
</dbReference>
<dbReference type="Pfam" id="PF00301">
    <property type="entry name" value="Rubredoxin"/>
    <property type="match status" value="1"/>
</dbReference>
<dbReference type="PIRSF" id="PIRSF000071">
    <property type="entry name" value="Rubredoxin"/>
    <property type="match status" value="1"/>
</dbReference>
<dbReference type="PRINTS" id="PR00163">
    <property type="entry name" value="RUBREDOXIN"/>
</dbReference>
<dbReference type="SUPFAM" id="SSF57802">
    <property type="entry name" value="Rubredoxin-like"/>
    <property type="match status" value="1"/>
</dbReference>
<dbReference type="PROSITE" id="PS00202">
    <property type="entry name" value="RUBREDOXIN"/>
    <property type="match status" value="1"/>
</dbReference>
<dbReference type="PROSITE" id="PS50903">
    <property type="entry name" value="RUBREDOXIN_LIKE"/>
    <property type="match status" value="1"/>
</dbReference>
<evidence type="ECO:0000250" key="1"/>
<evidence type="ECO:0000255" key="2">
    <source>
        <dbReference type="PROSITE-ProRule" id="PRU00241"/>
    </source>
</evidence>
<evidence type="ECO:0000305" key="3"/>
<sequence length="53" mass="5889">MTKYVCTVCGYVYDPEVGDPDNNINPGTSFQDIPEDWVCPLCGVGKDQFEEEA</sequence>